<proteinExistence type="inferred from homology"/>
<reference key="1">
    <citation type="journal article" date="2007" name="Science">
        <title>Genome sequence of Aedes aegypti, a major arbovirus vector.</title>
        <authorList>
            <person name="Nene V."/>
            <person name="Wortman J.R."/>
            <person name="Lawson D."/>
            <person name="Haas B.J."/>
            <person name="Kodira C.D."/>
            <person name="Tu Z.J."/>
            <person name="Loftus B.J."/>
            <person name="Xi Z."/>
            <person name="Megy K."/>
            <person name="Grabherr M."/>
            <person name="Ren Q."/>
            <person name="Zdobnov E.M."/>
            <person name="Lobo N.F."/>
            <person name="Campbell K.S."/>
            <person name="Brown S.E."/>
            <person name="Bonaldo M.F."/>
            <person name="Zhu J."/>
            <person name="Sinkins S.P."/>
            <person name="Hogenkamp D.G."/>
            <person name="Amedeo P."/>
            <person name="Arensburger P."/>
            <person name="Atkinson P.W."/>
            <person name="Bidwell S.L."/>
            <person name="Biedler J."/>
            <person name="Birney E."/>
            <person name="Bruggner R.V."/>
            <person name="Costas J."/>
            <person name="Coy M.R."/>
            <person name="Crabtree J."/>
            <person name="Crawford M."/>
            <person name="DeBruyn B."/>
            <person name="DeCaprio D."/>
            <person name="Eiglmeier K."/>
            <person name="Eisenstadt E."/>
            <person name="El-Dorry H."/>
            <person name="Gelbart W.M."/>
            <person name="Gomes S.L."/>
            <person name="Hammond M."/>
            <person name="Hannick L.I."/>
            <person name="Hogan J.R."/>
            <person name="Holmes M.H."/>
            <person name="Jaffe D."/>
            <person name="Johnston S.J."/>
            <person name="Kennedy R.C."/>
            <person name="Koo H."/>
            <person name="Kravitz S."/>
            <person name="Kriventseva E.V."/>
            <person name="Kulp D."/>
            <person name="Labutti K."/>
            <person name="Lee E."/>
            <person name="Li S."/>
            <person name="Lovin D.D."/>
            <person name="Mao C."/>
            <person name="Mauceli E."/>
            <person name="Menck C.F."/>
            <person name="Miller J.R."/>
            <person name="Montgomery P."/>
            <person name="Mori A."/>
            <person name="Nascimento A.L."/>
            <person name="Naveira H.F."/>
            <person name="Nusbaum C."/>
            <person name="O'Leary S.B."/>
            <person name="Orvis J."/>
            <person name="Pertea M."/>
            <person name="Quesneville H."/>
            <person name="Reidenbach K.R."/>
            <person name="Rogers Y.-H.C."/>
            <person name="Roth C.W."/>
            <person name="Schneider J.R."/>
            <person name="Schatz M."/>
            <person name="Shumway M."/>
            <person name="Stanke M."/>
            <person name="Stinson E.O."/>
            <person name="Tubio J.M.C."/>
            <person name="Vanzee J.P."/>
            <person name="Verjovski-Almeida S."/>
            <person name="Werner D."/>
            <person name="White O.R."/>
            <person name="Wyder S."/>
            <person name="Zeng Q."/>
            <person name="Zhao Q."/>
            <person name="Zhao Y."/>
            <person name="Hill C.A."/>
            <person name="Raikhel A.S."/>
            <person name="Soares M.B."/>
            <person name="Knudson D.L."/>
            <person name="Lee N.H."/>
            <person name="Galagan J."/>
            <person name="Salzberg S.L."/>
            <person name="Paulsen I.T."/>
            <person name="Dimopoulos G."/>
            <person name="Collins F.H."/>
            <person name="Bruce B."/>
            <person name="Fraser-Liggett C.M."/>
            <person name="Severson D.W."/>
        </authorList>
    </citation>
    <scope>NUCLEOTIDE SEQUENCE [LARGE SCALE GENOMIC DNA]</scope>
    <source>
        <strain>LVPib12</strain>
    </source>
</reference>
<evidence type="ECO:0000255" key="1">
    <source>
        <dbReference type="HAMAP-Rule" id="MF_03144"/>
    </source>
</evidence>
<organism>
    <name type="scientific">Aedes aegypti</name>
    <name type="common">Yellowfever mosquito</name>
    <name type="synonym">Culex aegypti</name>
    <dbReference type="NCBI Taxonomy" id="7159"/>
    <lineage>
        <taxon>Eukaryota</taxon>
        <taxon>Metazoa</taxon>
        <taxon>Ecdysozoa</taxon>
        <taxon>Arthropoda</taxon>
        <taxon>Hexapoda</taxon>
        <taxon>Insecta</taxon>
        <taxon>Pterygota</taxon>
        <taxon>Neoptera</taxon>
        <taxon>Endopterygota</taxon>
        <taxon>Diptera</taxon>
        <taxon>Nematocera</taxon>
        <taxon>Culicoidea</taxon>
        <taxon>Culicidae</taxon>
        <taxon>Culicinae</taxon>
        <taxon>Aedini</taxon>
        <taxon>Aedes</taxon>
        <taxon>Stegomyia</taxon>
    </lineage>
</organism>
<comment type="function">
    <text evidence="1">Catalytic subunit of the tRNA-splicing ligase complex that acts by directly joining spliced tRNA halves to mature-sized tRNAs by incorporating the precursor-derived splice junction phosphate into the mature tRNA as a canonical 3',5'-phosphodiester. May act as an RNA ligase with broad substrate specificity, and may function toward other RNAs.</text>
</comment>
<comment type="catalytic activity">
    <reaction evidence="1">
        <text>a 3'-end 3'-phospho-ribonucleotide-RNA + a 5'-end dephospho-ribonucleoside-RNA + GTP = a ribonucleotidyl-ribonucleotide-RNA + GMP + diphosphate</text>
        <dbReference type="Rhea" id="RHEA:68076"/>
        <dbReference type="Rhea" id="RHEA-COMP:10463"/>
        <dbReference type="Rhea" id="RHEA-COMP:13936"/>
        <dbReference type="Rhea" id="RHEA-COMP:17355"/>
        <dbReference type="ChEBI" id="CHEBI:33019"/>
        <dbReference type="ChEBI" id="CHEBI:37565"/>
        <dbReference type="ChEBI" id="CHEBI:58115"/>
        <dbReference type="ChEBI" id="CHEBI:83062"/>
        <dbReference type="ChEBI" id="CHEBI:138284"/>
        <dbReference type="ChEBI" id="CHEBI:173118"/>
        <dbReference type="EC" id="6.5.1.8"/>
    </reaction>
</comment>
<comment type="catalytic activity">
    <reaction evidence="1">
        <text>a 3'-end 2',3'-cyclophospho-ribonucleotide-RNA + a 5'-end dephospho-ribonucleoside-RNA + GTP + H2O = a ribonucleotidyl-ribonucleotide-RNA + GMP + diphosphate + H(+)</text>
        <dbReference type="Rhea" id="RHEA:68080"/>
        <dbReference type="Rhea" id="RHEA-COMP:10464"/>
        <dbReference type="Rhea" id="RHEA-COMP:13936"/>
        <dbReference type="Rhea" id="RHEA-COMP:17355"/>
        <dbReference type="ChEBI" id="CHEBI:15377"/>
        <dbReference type="ChEBI" id="CHEBI:15378"/>
        <dbReference type="ChEBI" id="CHEBI:33019"/>
        <dbReference type="ChEBI" id="CHEBI:37565"/>
        <dbReference type="ChEBI" id="CHEBI:58115"/>
        <dbReference type="ChEBI" id="CHEBI:83064"/>
        <dbReference type="ChEBI" id="CHEBI:138284"/>
        <dbReference type="ChEBI" id="CHEBI:173118"/>
        <dbReference type="EC" id="6.5.1.8"/>
    </reaction>
</comment>
<comment type="cofactor">
    <cofactor evidence="1">
        <name>Mn(2+)</name>
        <dbReference type="ChEBI" id="CHEBI:29035"/>
    </cofactor>
    <text evidence="1">Binds 2 manganese ions per subunit.</text>
</comment>
<comment type="subunit">
    <text evidence="1">Catalytic component of the tRNA-splicing ligase complex.</text>
</comment>
<comment type="miscellaneous">
    <text evidence="1">Ligation probably proceeds through 3 nucleotidyl transfer steps, with 2',3'-cyclic phosphate termini being hydrolyzed to 3'-P termini in a step that precedes 3'-P activation with GMP. In the first nucleotidyl transfer step, RTCB reacts with GTP to form a covalent RTCB-histidine-GMP intermediate with release of PPi; in the second step, the GMP moiety is transferred to the RNA 3'-P; in the third step, the 5'-OH from the opposite RNA strand attacks the activated 3'-P to form a 3',5'-phosphodiester bond and release GMP.</text>
</comment>
<comment type="similarity">
    <text evidence="1">Belongs to the RtcB family.</text>
</comment>
<accession>Q17FP1</accession>
<protein>
    <recommendedName>
        <fullName evidence="1">RNA-splicing ligase RtcB homolog</fullName>
        <ecNumber evidence="1">6.5.1.8</ecNumber>
    </recommendedName>
    <alternativeName>
        <fullName evidence="1">3'-phosphate/5'-hydroxy nucleic acid ligase</fullName>
    </alternativeName>
</protein>
<dbReference type="EC" id="6.5.1.8" evidence="1"/>
<dbReference type="EMBL" id="CH477269">
    <property type="protein sequence ID" value="EAT45383.1"/>
    <property type="molecule type" value="Genomic_DNA"/>
</dbReference>
<dbReference type="SMR" id="Q17FP1"/>
<dbReference type="FunCoup" id="Q17FP1">
    <property type="interactions" value="1494"/>
</dbReference>
<dbReference type="STRING" id="7159.Q17FP1"/>
<dbReference type="PaxDb" id="7159-AAEL003336-PA"/>
<dbReference type="EnsemblMetazoa" id="AAEL003336-RA">
    <property type="protein sequence ID" value="AAEL003336-PA"/>
    <property type="gene ID" value="AAEL003336"/>
</dbReference>
<dbReference type="GeneID" id="5577915"/>
<dbReference type="KEGG" id="aag:5577915"/>
<dbReference type="CTD" id="51493"/>
<dbReference type="VEuPathDB" id="VectorBase:AAEL003336"/>
<dbReference type="eggNOG" id="KOG3833">
    <property type="taxonomic scope" value="Eukaryota"/>
</dbReference>
<dbReference type="HOGENOM" id="CLU_022279_0_0_1"/>
<dbReference type="InParanoid" id="Q17FP1"/>
<dbReference type="OMA" id="QTRGVEC"/>
<dbReference type="OrthoDB" id="10249697at2759"/>
<dbReference type="PhylomeDB" id="Q17FP1"/>
<dbReference type="Proteomes" id="UP000008820">
    <property type="component" value="Chromosome 2"/>
</dbReference>
<dbReference type="Proteomes" id="UP000682892">
    <property type="component" value="Unassembled WGS sequence"/>
</dbReference>
<dbReference type="GO" id="GO:0005634">
    <property type="term" value="C:nucleus"/>
    <property type="evidence" value="ECO:0007669"/>
    <property type="project" value="TreeGrafter"/>
</dbReference>
<dbReference type="GO" id="GO:0072669">
    <property type="term" value="C:tRNA-splicing ligase complex"/>
    <property type="evidence" value="ECO:0007669"/>
    <property type="project" value="UniProtKB-UniRule"/>
</dbReference>
<dbReference type="GO" id="GO:0005525">
    <property type="term" value="F:GTP binding"/>
    <property type="evidence" value="ECO:0007669"/>
    <property type="project" value="UniProtKB-KW"/>
</dbReference>
<dbReference type="GO" id="GO:0046872">
    <property type="term" value="F:metal ion binding"/>
    <property type="evidence" value="ECO:0007669"/>
    <property type="project" value="UniProtKB-KW"/>
</dbReference>
<dbReference type="GO" id="GO:0003972">
    <property type="term" value="F:RNA ligase (ATP) activity"/>
    <property type="evidence" value="ECO:0007669"/>
    <property type="project" value="TreeGrafter"/>
</dbReference>
<dbReference type="GO" id="GO:0170057">
    <property type="term" value="F:RNA ligase (GTP) activity"/>
    <property type="evidence" value="ECO:0007669"/>
    <property type="project" value="UniProtKB-EC"/>
</dbReference>
<dbReference type="GO" id="GO:0006388">
    <property type="term" value="P:tRNA splicing, via endonucleolytic cleavage and ligation"/>
    <property type="evidence" value="ECO:0007669"/>
    <property type="project" value="UniProtKB-UniRule"/>
</dbReference>
<dbReference type="FunFam" id="3.90.1860.10:FF:000001">
    <property type="entry name" value="tRNA-splicing ligase RtcB homolog"/>
    <property type="match status" value="1"/>
</dbReference>
<dbReference type="Gene3D" id="3.90.1860.10">
    <property type="entry name" value="tRNA-splicing ligase RtcB"/>
    <property type="match status" value="1"/>
</dbReference>
<dbReference type="HAMAP" id="MF_03144">
    <property type="entry name" value="RtcB_euk"/>
    <property type="match status" value="1"/>
</dbReference>
<dbReference type="InterPro" id="IPR001233">
    <property type="entry name" value="RtcB"/>
</dbReference>
<dbReference type="InterPro" id="IPR036025">
    <property type="entry name" value="RtcB-like_sf"/>
</dbReference>
<dbReference type="InterPro" id="IPR027513">
    <property type="entry name" value="RtcB_euk"/>
</dbReference>
<dbReference type="PANTHER" id="PTHR11118">
    <property type="entry name" value="RNA-SPLICING LIGASE RTCB HOMOLOG"/>
    <property type="match status" value="1"/>
</dbReference>
<dbReference type="PANTHER" id="PTHR11118:SF1">
    <property type="entry name" value="RNA-SPLICING LIGASE RTCB HOMOLOG"/>
    <property type="match status" value="1"/>
</dbReference>
<dbReference type="Pfam" id="PF01139">
    <property type="entry name" value="RtcB"/>
    <property type="match status" value="1"/>
</dbReference>
<dbReference type="SUPFAM" id="SSF103365">
    <property type="entry name" value="Hypothetical protein PH1602"/>
    <property type="match status" value="1"/>
</dbReference>
<dbReference type="PROSITE" id="PS01288">
    <property type="entry name" value="UPF0027"/>
    <property type="match status" value="1"/>
</dbReference>
<feature type="chain" id="PRO_0000407222" description="RNA-splicing ligase RtcB homolog">
    <location>
        <begin position="1"/>
        <end position="506"/>
    </location>
</feature>
<feature type="active site" description="GMP-histidine intermediate" evidence="1">
    <location>
        <position position="429"/>
    </location>
</feature>
<feature type="binding site" evidence="1">
    <location>
        <position position="120"/>
    </location>
    <ligand>
        <name>Mn(2+)</name>
        <dbReference type="ChEBI" id="CHEBI:29035"/>
        <label>1</label>
    </ligand>
</feature>
<feature type="binding site" evidence="1">
    <location>
        <position position="123"/>
    </location>
    <ligand>
        <name>Mn(2+)</name>
        <dbReference type="ChEBI" id="CHEBI:29035"/>
        <label>1</label>
    </ligand>
</feature>
<feature type="binding site" evidence="1">
    <location>
        <position position="123"/>
    </location>
    <ligand>
        <name>Mn(2+)</name>
        <dbReference type="ChEBI" id="CHEBI:29035"/>
        <label>2</label>
    </ligand>
</feature>
<feature type="binding site" evidence="1">
    <location>
        <begin position="227"/>
        <end position="231"/>
    </location>
    <ligand>
        <name>GMP</name>
        <dbReference type="ChEBI" id="CHEBI:58115"/>
    </ligand>
</feature>
<feature type="binding site" evidence="1">
    <location>
        <position position="228"/>
    </location>
    <ligand>
        <name>Mn(2+)</name>
        <dbReference type="ChEBI" id="CHEBI:29035"/>
        <label>1</label>
    </ligand>
</feature>
<feature type="binding site" evidence="1">
    <location>
        <position position="260"/>
    </location>
    <ligand>
        <name>Mn(2+)</name>
        <dbReference type="ChEBI" id="CHEBI:29035"/>
        <label>2</label>
    </ligand>
</feature>
<feature type="binding site" evidence="1">
    <location>
        <begin position="354"/>
        <end position="355"/>
    </location>
    <ligand>
        <name>GMP</name>
        <dbReference type="ChEBI" id="CHEBI:58115"/>
    </ligand>
</feature>
<feature type="binding site" evidence="1">
    <location>
        <position position="354"/>
    </location>
    <ligand>
        <name>Mn(2+)</name>
        <dbReference type="ChEBI" id="CHEBI:29035"/>
        <label>2</label>
    </ligand>
</feature>
<feature type="binding site" evidence="1">
    <location>
        <begin position="403"/>
        <end position="406"/>
    </location>
    <ligand>
        <name>GMP</name>
        <dbReference type="ChEBI" id="CHEBI:58115"/>
    </ligand>
</feature>
<feature type="binding site" evidence="1">
    <location>
        <position position="410"/>
    </location>
    <ligand>
        <name>GMP</name>
        <dbReference type="ChEBI" id="CHEBI:58115"/>
    </ligand>
</feature>
<feature type="binding site" evidence="1">
    <location>
        <begin position="429"/>
        <end position="432"/>
    </location>
    <ligand>
        <name>GMP</name>
        <dbReference type="ChEBI" id="CHEBI:58115"/>
    </ligand>
</feature>
<feature type="binding site" evidence="1">
    <location>
        <position position="505"/>
    </location>
    <ligand>
        <name>GMP</name>
        <dbReference type="ChEBI" id="CHEBI:58115"/>
    </ligand>
</feature>
<gene>
    <name type="ORF">AAEL003336</name>
</gene>
<sequence>MVVREYNEELKYIEKISPNSYLIKKGFQPNMNVEGIFYANSKLERLMFDELRNSCRPGMTGGFLPGVKQIANVAALPGIVGRSVGLPDIHSGYGFAIGNMAAFDMSNPVSIVSPGGVGFDINCGVRLLRTNLFEKDVKPVQEQLAQSLFDHIPVGVGSKGIIPMNAHDLEEALEMGMDWSLREGYVWAEDKEHCEEYGRMLNADPSKVSMRAKKRGLPQLGTLGAGNHYAEIQVVEEIYDKFAASKMGIEELGQICVMIHSGSRGFGHQVATDALVEMEKAMKRDKIETNDRQLACARINSVEGQNYLKAMAAAANFAWVNRSSMTFLTRQAFAKQFNTTPDDLDMHVIYDVSHNVAKMEEHMVDGRPKQLLVHRKGSTRALPPHHPLIPVDYQLTGQPVLIGGSMGTCSFVLTGTEKGMAATFGSTCHGAGRSLSRAKSRRNLDYKDVLRDLEAKGIAIRVASPKLVQEEAPDSYKDVRDVVQTCHDVGISAKAIKLRPIAVIKG</sequence>
<keyword id="KW-0342">GTP-binding</keyword>
<keyword id="KW-0436">Ligase</keyword>
<keyword id="KW-0464">Manganese</keyword>
<keyword id="KW-0479">Metal-binding</keyword>
<keyword id="KW-0547">Nucleotide-binding</keyword>
<keyword id="KW-1185">Reference proteome</keyword>
<keyword id="KW-0819">tRNA processing</keyword>
<name>RTCB_AEDAE</name>